<geneLocation type="mitochondrion"/>
<feature type="chain" id="PRO_0000232720" description="ATP synthase F(0) complex subunit a">
    <location>
        <begin position="1"/>
        <end position="222"/>
    </location>
</feature>
<feature type="transmembrane region" description="Helical" evidence="2">
    <location>
        <begin position="7"/>
        <end position="27"/>
    </location>
</feature>
<feature type="transmembrane region" description="Helical" evidence="2">
    <location>
        <begin position="64"/>
        <end position="84"/>
    </location>
</feature>
<feature type="transmembrane region" description="Helical" evidence="2">
    <location>
        <begin position="93"/>
        <end position="113"/>
    </location>
</feature>
<feature type="transmembrane region" description="Helical" evidence="2">
    <location>
        <begin position="132"/>
        <end position="152"/>
    </location>
</feature>
<feature type="transmembrane region" description="Helical" evidence="2">
    <location>
        <begin position="160"/>
        <end position="180"/>
    </location>
</feature>
<feature type="transmembrane region" description="Helical" evidence="2">
    <location>
        <begin position="185"/>
        <end position="205"/>
    </location>
</feature>
<gene>
    <name evidence="1" type="primary">MT-ATP6</name>
    <name type="synonym">ATP6</name>
    <name type="synonym">ATPASE6</name>
    <name type="synonym">MTATP6</name>
</gene>
<sequence length="222" mass="24435">MNEELSAFFDVPVGTMMLAIAFPAILLPTPNRLITNRWITIQQWLVKLIMKQLLSIHNTKGLSWSLMLITLTLFIGLTNLLGLLPYSFAPTAQLTVNLSMAIPLWTGTVILGFRYKTKISLAHLLPQGTPTFLIPMIIIIETISLLIRPVTLAVRLTANITAGHLLIHLTGTAALTLLSIHSMTITVTFITVVVLTILELAVALIQAYVFALLISLYLHESA</sequence>
<keyword id="KW-0066">ATP synthesis</keyword>
<keyword id="KW-0138">CF(0)</keyword>
<keyword id="KW-0952">Extinct organism protein</keyword>
<keyword id="KW-0375">Hydrogen ion transport</keyword>
<keyword id="KW-0406">Ion transport</keyword>
<keyword id="KW-0472">Membrane</keyword>
<keyword id="KW-0496">Mitochondrion</keyword>
<keyword id="KW-0999">Mitochondrion inner membrane</keyword>
<keyword id="KW-0812">Transmembrane</keyword>
<keyword id="KW-1133">Transmembrane helix</keyword>
<keyword id="KW-0813">Transport</keyword>
<accession>Q38PR7</accession>
<organism>
    <name type="scientific">Mammuthus primigenius</name>
    <name type="common">Siberian woolly mammoth</name>
    <dbReference type="NCBI Taxonomy" id="37349"/>
    <lineage>
        <taxon>Eukaryota</taxon>
        <taxon>Metazoa</taxon>
        <taxon>Chordata</taxon>
        <taxon>Craniata</taxon>
        <taxon>Vertebrata</taxon>
        <taxon>Euteleostomi</taxon>
        <taxon>Mammalia</taxon>
        <taxon>Eutheria</taxon>
        <taxon>Afrotheria</taxon>
        <taxon>Proboscidea</taxon>
        <taxon>Elephantidae</taxon>
        <taxon>Mammuthus</taxon>
    </lineage>
</organism>
<name>ATP6_MAMPR</name>
<dbReference type="EMBL" id="DQ188829">
    <property type="protein sequence ID" value="ABA29789.1"/>
    <property type="molecule type" value="Genomic_DNA"/>
</dbReference>
<dbReference type="EMBL" id="DQ316067">
    <property type="protein sequence ID" value="ABC17883.1"/>
    <property type="molecule type" value="Genomic_DNA"/>
</dbReference>
<dbReference type="RefSeq" id="YP_398759.1">
    <property type="nucleotide sequence ID" value="NC_007596.2"/>
</dbReference>
<dbReference type="SMR" id="Q38PR7"/>
<dbReference type="GeneID" id="3773146"/>
<dbReference type="CTD" id="4508"/>
<dbReference type="GO" id="GO:0005743">
    <property type="term" value="C:mitochondrial inner membrane"/>
    <property type="evidence" value="ECO:0007669"/>
    <property type="project" value="UniProtKB-SubCell"/>
</dbReference>
<dbReference type="GO" id="GO:0045259">
    <property type="term" value="C:proton-transporting ATP synthase complex"/>
    <property type="evidence" value="ECO:0000250"/>
    <property type="project" value="UniProtKB"/>
</dbReference>
<dbReference type="GO" id="GO:0015252">
    <property type="term" value="F:proton channel activity"/>
    <property type="evidence" value="ECO:0000250"/>
    <property type="project" value="UniProtKB"/>
</dbReference>
<dbReference type="GO" id="GO:0046933">
    <property type="term" value="F:proton-transporting ATP synthase activity, rotational mechanism"/>
    <property type="evidence" value="ECO:0007669"/>
    <property type="project" value="TreeGrafter"/>
</dbReference>
<dbReference type="GO" id="GO:0015986">
    <property type="term" value="P:proton motive force-driven ATP synthesis"/>
    <property type="evidence" value="ECO:0000250"/>
    <property type="project" value="UniProtKB"/>
</dbReference>
<dbReference type="GO" id="GO:1902600">
    <property type="term" value="P:proton transmembrane transport"/>
    <property type="evidence" value="ECO:0000250"/>
    <property type="project" value="UniProtKB"/>
</dbReference>
<dbReference type="CDD" id="cd00310">
    <property type="entry name" value="ATP-synt_Fo_a_6"/>
    <property type="match status" value="1"/>
</dbReference>
<dbReference type="FunFam" id="1.20.120.220:FF:000004">
    <property type="entry name" value="ATP synthase subunit a"/>
    <property type="match status" value="1"/>
</dbReference>
<dbReference type="Gene3D" id="1.20.120.220">
    <property type="entry name" value="ATP synthase, F0 complex, subunit A"/>
    <property type="match status" value="1"/>
</dbReference>
<dbReference type="InterPro" id="IPR000568">
    <property type="entry name" value="ATP_synth_F0_asu"/>
</dbReference>
<dbReference type="InterPro" id="IPR023011">
    <property type="entry name" value="ATP_synth_F0_asu_AS"/>
</dbReference>
<dbReference type="InterPro" id="IPR045083">
    <property type="entry name" value="ATP_synth_F0_asu_bact/mt"/>
</dbReference>
<dbReference type="InterPro" id="IPR035908">
    <property type="entry name" value="F0_ATP_A_sf"/>
</dbReference>
<dbReference type="NCBIfam" id="TIGR01131">
    <property type="entry name" value="ATP_synt_6_or_A"/>
    <property type="match status" value="1"/>
</dbReference>
<dbReference type="PANTHER" id="PTHR11410">
    <property type="entry name" value="ATP SYNTHASE SUBUNIT A"/>
    <property type="match status" value="1"/>
</dbReference>
<dbReference type="PANTHER" id="PTHR11410:SF0">
    <property type="entry name" value="ATP SYNTHASE SUBUNIT A"/>
    <property type="match status" value="1"/>
</dbReference>
<dbReference type="Pfam" id="PF00119">
    <property type="entry name" value="ATP-synt_A"/>
    <property type="match status" value="1"/>
</dbReference>
<dbReference type="PRINTS" id="PR00123">
    <property type="entry name" value="ATPASEA"/>
</dbReference>
<dbReference type="SUPFAM" id="SSF81336">
    <property type="entry name" value="F1F0 ATP synthase subunit A"/>
    <property type="match status" value="1"/>
</dbReference>
<dbReference type="PROSITE" id="PS00449">
    <property type="entry name" value="ATPASE_A"/>
    <property type="match status" value="1"/>
</dbReference>
<evidence type="ECO:0000250" key="1">
    <source>
        <dbReference type="UniProtKB" id="P00846"/>
    </source>
</evidence>
<evidence type="ECO:0000255" key="2"/>
<evidence type="ECO:0000305" key="3"/>
<reference key="1">
    <citation type="journal article" date="2006" name="Nature">
        <title>Multiplex amplification of the mammoth mitochondrial genome and the evolution of Elephantidae.</title>
        <authorList>
            <person name="Krause J."/>
            <person name="Dear P.H."/>
            <person name="Pollack J.L."/>
            <person name="Slatkin M."/>
            <person name="Spriggs H."/>
            <person name="Barnes I."/>
            <person name="Lister A.M."/>
            <person name="Ebersberger I."/>
            <person name="Paeaebo S."/>
            <person name="Hofreiter M."/>
        </authorList>
    </citation>
    <scope>NUCLEOTIDE SEQUENCE [GENOMIC DNA]</scope>
</reference>
<reference key="2">
    <citation type="journal article" date="2006" name="PLoS Biol.">
        <title>Complete mitochondrial genome and phylogeny of Pleistocene mammoth Mammuthus primigenius.</title>
        <authorList>
            <person name="Rogaev E.I."/>
            <person name="Moliaka Y.K."/>
            <person name="Malyarchuk B.A."/>
            <person name="Kondrashov F.A."/>
            <person name="Derenko M.V."/>
            <person name="Chumakov I."/>
            <person name="Grigorenko A.P."/>
        </authorList>
    </citation>
    <scope>NUCLEOTIDE SEQUENCE [GENOMIC DNA]</scope>
    <source>
        <tissue>Muscle</tissue>
    </source>
</reference>
<proteinExistence type="inferred from homology"/>
<protein>
    <recommendedName>
        <fullName evidence="1">ATP synthase F(0) complex subunit a</fullName>
    </recommendedName>
    <alternativeName>
        <fullName>F-ATPase protein 6</fullName>
    </alternativeName>
    <alternativeName>
        <fullName evidence="1">Proton-conducting channel, ATP synthase F(0) complex subunit a</fullName>
    </alternativeName>
</protein>
<comment type="function">
    <text evidence="1">Subunit a, of the mitochondrial membrane ATP synthase complex (F(1)F(0) ATP synthase or Complex V) that produces ATP from ADP in the presence of a proton gradient across the membrane which is generated by electron transport complexes of the respiratory chain. ATP synthase complex consist of a soluble F(1) head domain - the catalytic core - and a membrane F(1) domain - the membrane proton channel. These two domains are linked by a central stalk rotating inside the F(1) region and a stationary peripheral stalk. During catalysis, ATP synthesis in the catalytic domain of F(1) is coupled via a rotary mechanism of the central stalk subunits to proton translocation. With the subunit c (ATP5MC1), forms the proton-conducting channel in the F(0) domain, that contains two crucial half-channels (inlet and outlet) that facilitate proton movement from the mitochondrial intermembrane space (IMS) into the matrix. Protons are taken up via the inlet half-channel and released through the outlet half-channel, following a Grotthuss mechanism.</text>
</comment>
<comment type="catalytic activity">
    <reaction evidence="1">
        <text>H(+)(in) = H(+)(out)</text>
        <dbReference type="Rhea" id="RHEA:34979"/>
        <dbReference type="ChEBI" id="CHEBI:15378"/>
    </reaction>
</comment>
<comment type="subunit">
    <text evidence="1">Component of the ATP synthase complex composed at least of ATP5F1A/subunit alpha, ATP5F1B/subunit beta, ATP5MC1/subunit c (homooctomer), MT-ATP6/subunit a, MT-ATP8/subunit 8, ATP5ME/subunit e, ATP5MF/subunit f, ATP5MG/subunit g, ATP5MK/subunit k, ATP5MJ/subunit j, ATP5F1C/subunit gamma, ATP5F1D/subunit delta, ATP5F1E/subunit epsilon, ATP5PF/subunit F6, ATP5PB/subunit b, ATP5PD/subunit d, ATP5PO/subunit OSCP. ATP synthase complex consists of a soluble F(1) head domain (subunits alpha(3) and beta(3)) - the catalytic core - and a membrane F(0) domain - the membrane proton channel (subunits c, a, 8, e, f, g, k and j). These two domains are linked by a central stalk (subunits gamma, delta, and epsilon) rotating inside the F1 region and a stationary peripheral stalk (subunits F6, b, d, and OSCP). Interacts with DNAJC30; interaction is direct.</text>
</comment>
<comment type="subcellular location">
    <subcellularLocation>
        <location>Mitochondrion inner membrane</location>
        <topology>Multi-pass membrane protein</topology>
    </subcellularLocation>
</comment>
<comment type="similarity">
    <text evidence="3">Belongs to the ATPase A chain family.</text>
</comment>